<gene>
    <name type="primary">RPL40A</name>
    <name type="synonym">UBQ2</name>
    <name type="ordered locus">At2g36170</name>
    <name type="ORF">F9C22.10</name>
</gene>
<comment type="function">
    <molecule>Ubiquitin</molecule>
    <text evidence="1">Exists either covalently attached to another protein, or free (unanchored). When covalently bound, it is conjugated to target proteins via an isopeptide bond either as a monomer (monoubiquitin), a polymer linked via different Lys residues of the ubiquitin (polyubiquitin chains) or a linear polymer linked via the initiator Met of the ubiquitin (linear polyubiquitin chains). Polyubiquitin chains, when attached to a target protein, have different functions depending on the Lys residue of the ubiquitin that is linked: Lys-11-linked is involved in ERAD (endoplasmic reticulum-associated degradation) and in cell-cycle regulation; Lys-29-linked is involved in lysosomal degradation; Lys-33-linked is involved in kinase modification; Lys-48-linked is involved in protein degradation via the proteasome; Lys-63-linked is involved in endocytosis, and DNA-damage responses. Linear polymer chains formed via attachment by the initiator Met lead to cell signaling. Ubiquitin is usually conjugated to Lys residues of target proteins, however, in rare cases, conjugation to Cys or Ser residues has been observed. When polyubiquitin is free (unanchored-polyubiquitin), it also has distinct roles, such as in activation of protein kinases, and in signaling (By similarity).</text>
</comment>
<comment type="function">
    <molecule>Large ribosomal subunit protein eL40z</molecule>
    <text>Component of the 60S subunit of the ribosome.</text>
</comment>
<comment type="subunit">
    <molecule>Large ribosomal subunit protein eL40z</molecule>
    <text evidence="1">Part of the 60S ribosomal subunit.</text>
</comment>
<comment type="subcellular location">
    <molecule>Ubiquitin</molecule>
    <subcellularLocation>
        <location evidence="1">Cytoplasm</location>
    </subcellularLocation>
    <subcellularLocation>
        <location evidence="1">Nucleus</location>
    </subcellularLocation>
</comment>
<comment type="subcellular location">
    <molecule>Large ribosomal subunit protein eL40z</molecule>
    <subcellularLocation>
        <location evidence="1">Cytoplasm</location>
    </subcellularLocation>
</comment>
<comment type="miscellaneous">
    <text>Ubiquitin is encoded by 16 different genes. Ubiquitin is generally synthesized as a polyubiquitin precursor with tandem head to tail repeats. Often, there are one to three additional amino acids after the last repeat, removed in the mature protein. Alternatively, ubiquitin extension protein is synthesized as a single copy of ubiquitin fused to a ribosomal protein (either eL40 or eS31) or to a ubiquitin-related protein (either RUB1 or RUB2). Following translation, extension protein is cleaved from ubiquitin.</text>
</comment>
<comment type="similarity">
    <text evidence="4">In the N-terminal section; belongs to the ubiquitin family.</text>
</comment>
<comment type="similarity">
    <text evidence="4">In the C-terminal section; belongs to the eukaryotic ribosomal protein eL40 family.</text>
</comment>
<evidence type="ECO:0000250" key="1"/>
<evidence type="ECO:0000255" key="2">
    <source>
        <dbReference type="PROSITE-ProRule" id="PRU00214"/>
    </source>
</evidence>
<evidence type="ECO:0000303" key="3">
    <source>
    </source>
</evidence>
<evidence type="ECO:0000305" key="4"/>
<keyword id="KW-0963">Cytoplasm</keyword>
<keyword id="KW-1017">Isopeptide bond</keyword>
<keyword id="KW-0539">Nucleus</keyword>
<keyword id="KW-1185">Reference proteome</keyword>
<keyword id="KW-0687">Ribonucleoprotein</keyword>
<keyword id="KW-0689">Ribosomal protein</keyword>
<proteinExistence type="evidence at transcript level"/>
<name>RL40A_ARATH</name>
<protein>
    <recommendedName>
        <fullName evidence="4">Ubiquitin-ribosomal protein eL40z fusion protein</fullName>
    </recommendedName>
    <component>
        <recommendedName>
            <fullName>Ubiquitin</fullName>
        </recommendedName>
    </component>
    <component>
        <recommendedName>
            <fullName evidence="3">Large ribosomal subunit protein eL40z</fullName>
        </recommendedName>
        <alternativeName>
            <fullName>60S ribosomal protein L40-1</fullName>
        </alternativeName>
        <alternativeName>
            <fullName>CEP52</fullName>
        </alternativeName>
    </component>
</protein>
<accession>B9DHA6</accession>
<accession>O80715</accession>
<accession>P19232</accession>
<accession>P59263</accession>
<accession>Q38875</accession>
<accession>Q9LDJ2</accession>
<accession>Q9LYW1</accession>
<accession>Q9M0W3</accession>
<accession>Q9M1P9</accession>
<accession>Q9S7X3</accession>
<feature type="chain" id="PRO_0000396865" description="Ubiquitin">
    <location>
        <begin position="1"/>
        <end position="76"/>
    </location>
</feature>
<feature type="chain" id="PRO_0000138758" description="Large ribosomal subunit protein eL40z">
    <location>
        <begin position="77"/>
        <end position="128"/>
    </location>
</feature>
<feature type="domain" description="Ubiquitin-like" evidence="2">
    <location>
        <begin position="1"/>
        <end position="76"/>
    </location>
</feature>
<feature type="cross-link" description="Glycyl lysine isopeptide (Gly-Lys) (interchain with K-? in acceptor proteins)" evidence="2">
    <location>
        <position position="76"/>
    </location>
</feature>
<organism>
    <name type="scientific">Arabidopsis thaliana</name>
    <name type="common">Mouse-ear cress</name>
    <dbReference type="NCBI Taxonomy" id="3702"/>
    <lineage>
        <taxon>Eukaryota</taxon>
        <taxon>Viridiplantae</taxon>
        <taxon>Streptophyta</taxon>
        <taxon>Embryophyta</taxon>
        <taxon>Tracheophyta</taxon>
        <taxon>Spermatophyta</taxon>
        <taxon>Magnoliopsida</taxon>
        <taxon>eudicotyledons</taxon>
        <taxon>Gunneridae</taxon>
        <taxon>Pentapetalae</taxon>
        <taxon>rosids</taxon>
        <taxon>malvids</taxon>
        <taxon>Brassicales</taxon>
        <taxon>Brassicaceae</taxon>
        <taxon>Camelineae</taxon>
        <taxon>Arabidopsis</taxon>
    </lineage>
</organism>
<dbReference type="EMBL" id="J05508">
    <property type="protein sequence ID" value="AAA32905.1"/>
    <property type="molecule type" value="Genomic_DNA"/>
</dbReference>
<dbReference type="EMBL" id="AC006921">
    <property type="status" value="NOT_ANNOTATED_CDS"/>
    <property type="molecule type" value="Genomic_DNA"/>
</dbReference>
<dbReference type="EMBL" id="AC007135">
    <property type="protein sequence ID" value="AAM15407.1"/>
    <property type="molecule type" value="Genomic_DNA"/>
</dbReference>
<dbReference type="EMBL" id="CP002685">
    <property type="protein sequence ID" value="AEC09212.1"/>
    <property type="molecule type" value="Genomic_DNA"/>
</dbReference>
<dbReference type="EMBL" id="AF360311">
    <property type="protein sequence ID" value="AAK26021.1"/>
    <property type="molecule type" value="mRNA"/>
</dbReference>
<dbReference type="EMBL" id="AY056360">
    <property type="protein sequence ID" value="AAL07246.1"/>
    <property type="molecule type" value="mRNA"/>
</dbReference>
<dbReference type="EMBL" id="AK317456">
    <property type="protein sequence ID" value="BAH20123.1"/>
    <property type="molecule type" value="mRNA"/>
</dbReference>
<dbReference type="PIR" id="B36571">
    <property type="entry name" value="B36571"/>
</dbReference>
<dbReference type="RefSeq" id="NP_565836.1">
    <property type="nucleotide sequence ID" value="NM_129175.3"/>
</dbReference>
<dbReference type="BMRB" id="B9DHA6"/>
<dbReference type="SMR" id="B9DHA6"/>
<dbReference type="BioGRID" id="3533">
    <property type="interactions" value="1"/>
</dbReference>
<dbReference type="BioGRID" id="9743">
    <property type="interactions" value="12"/>
</dbReference>
<dbReference type="FunCoup" id="B9DHA6">
    <property type="interactions" value="2979"/>
</dbReference>
<dbReference type="STRING" id="3702.B9DHA6"/>
<dbReference type="iPTMnet" id="B9DHA6"/>
<dbReference type="PaxDb" id="3702-AT2G36170.1"/>
<dbReference type="EnsemblPlants" id="AT2G36170.1">
    <property type="protein sequence ID" value="AT2G36170.1"/>
    <property type="gene ID" value="AT2G36170"/>
</dbReference>
<dbReference type="EnsemblPlants" id="AT3G52590.1">
    <property type="protein sequence ID" value="AT3G52590.1"/>
    <property type="gene ID" value="AT3G52590"/>
</dbReference>
<dbReference type="GeneID" id="818189"/>
<dbReference type="Gramene" id="AT2G36170.1">
    <property type="protein sequence ID" value="AT2G36170.1"/>
    <property type="gene ID" value="AT2G36170"/>
</dbReference>
<dbReference type="Gramene" id="AT3G52590.1">
    <property type="protein sequence ID" value="AT3G52590.1"/>
    <property type="gene ID" value="AT3G52590"/>
</dbReference>
<dbReference type="KEGG" id="ath:AT2G36170"/>
<dbReference type="KEGG" id="ath:AT3G52590"/>
<dbReference type="Araport" id="AT2G36170"/>
<dbReference type="TAIR" id="AT2G36170">
    <property type="gene designation" value="UBQ2"/>
</dbReference>
<dbReference type="eggNOG" id="KOG0003">
    <property type="taxonomic scope" value="Eukaryota"/>
</dbReference>
<dbReference type="HOGENOM" id="CLU_010412_3_4_1"/>
<dbReference type="InParanoid" id="B9DHA6"/>
<dbReference type="OMA" id="AMKYNCE"/>
<dbReference type="OrthoDB" id="472at2759"/>
<dbReference type="PRO" id="PR:B9DHA6"/>
<dbReference type="Proteomes" id="UP000006548">
    <property type="component" value="Chromosome 2"/>
</dbReference>
<dbReference type="ExpressionAtlas" id="B9DHA6">
    <property type="expression patterns" value="baseline and differential"/>
</dbReference>
<dbReference type="GO" id="GO:0022625">
    <property type="term" value="C:cytosolic large ribosomal subunit"/>
    <property type="evidence" value="ECO:0007005"/>
    <property type="project" value="TAIR"/>
</dbReference>
<dbReference type="GO" id="GO:0005783">
    <property type="term" value="C:endoplasmic reticulum"/>
    <property type="evidence" value="ECO:0007005"/>
    <property type="project" value="TAIR"/>
</dbReference>
<dbReference type="GO" id="GO:0005730">
    <property type="term" value="C:nucleolus"/>
    <property type="evidence" value="ECO:0007005"/>
    <property type="project" value="TAIR"/>
</dbReference>
<dbReference type="GO" id="GO:0003729">
    <property type="term" value="F:mRNA binding"/>
    <property type="evidence" value="ECO:0000314"/>
    <property type="project" value="TAIR"/>
</dbReference>
<dbReference type="GO" id="GO:0003735">
    <property type="term" value="F:structural constituent of ribosome"/>
    <property type="evidence" value="ECO:0000314"/>
    <property type="project" value="CAFA"/>
</dbReference>
<dbReference type="GO" id="GO:0006412">
    <property type="term" value="P:translation"/>
    <property type="evidence" value="ECO:0007669"/>
    <property type="project" value="InterPro"/>
</dbReference>
<dbReference type="CDD" id="cd01803">
    <property type="entry name" value="Ubl_ubiquitin"/>
    <property type="match status" value="1"/>
</dbReference>
<dbReference type="FunFam" id="3.10.20.90:FF:000014">
    <property type="entry name" value="Ubiquitin-60S ribosomal L40 fusion"/>
    <property type="match status" value="1"/>
</dbReference>
<dbReference type="FunFam" id="4.10.1060.50:FF:000001">
    <property type="entry name" value="ubiquitin-60S ribosomal protein L40"/>
    <property type="match status" value="1"/>
</dbReference>
<dbReference type="Gene3D" id="4.10.1060.50">
    <property type="match status" value="1"/>
</dbReference>
<dbReference type="Gene3D" id="3.10.20.90">
    <property type="entry name" value="Phosphatidylinositol 3-kinase Catalytic Subunit, Chain A, domain 1"/>
    <property type="match status" value="1"/>
</dbReference>
<dbReference type="InterPro" id="IPR001975">
    <property type="entry name" value="Ribosomal_eL40_dom"/>
</dbReference>
<dbReference type="InterPro" id="IPR038587">
    <property type="entry name" value="Ribosomal_eL40_sf"/>
</dbReference>
<dbReference type="InterPro" id="IPR011332">
    <property type="entry name" value="Ribosomal_zn-bd"/>
</dbReference>
<dbReference type="InterPro" id="IPR000626">
    <property type="entry name" value="Ubiquitin-like_dom"/>
</dbReference>
<dbReference type="InterPro" id="IPR029071">
    <property type="entry name" value="Ubiquitin-like_domsf"/>
</dbReference>
<dbReference type="InterPro" id="IPR019954">
    <property type="entry name" value="Ubiquitin_CS"/>
</dbReference>
<dbReference type="InterPro" id="IPR019956">
    <property type="entry name" value="Ubiquitin_dom"/>
</dbReference>
<dbReference type="InterPro" id="IPR050158">
    <property type="entry name" value="Ubiquitin_ubiquitin-like"/>
</dbReference>
<dbReference type="PANTHER" id="PTHR10666">
    <property type="entry name" value="UBIQUITIN"/>
    <property type="match status" value="1"/>
</dbReference>
<dbReference type="Pfam" id="PF01020">
    <property type="entry name" value="Ribosomal_L40e"/>
    <property type="match status" value="1"/>
</dbReference>
<dbReference type="Pfam" id="PF00240">
    <property type="entry name" value="ubiquitin"/>
    <property type="match status" value="1"/>
</dbReference>
<dbReference type="PRINTS" id="PR00348">
    <property type="entry name" value="UBIQUITIN"/>
</dbReference>
<dbReference type="SMART" id="SM01377">
    <property type="entry name" value="Ribosomal_L40e"/>
    <property type="match status" value="1"/>
</dbReference>
<dbReference type="SMART" id="SM00213">
    <property type="entry name" value="UBQ"/>
    <property type="match status" value="1"/>
</dbReference>
<dbReference type="SUPFAM" id="SSF54236">
    <property type="entry name" value="Ubiquitin-like"/>
    <property type="match status" value="1"/>
</dbReference>
<dbReference type="SUPFAM" id="SSF57829">
    <property type="entry name" value="Zn-binding ribosomal proteins"/>
    <property type="match status" value="1"/>
</dbReference>
<dbReference type="PROSITE" id="PS00299">
    <property type="entry name" value="UBIQUITIN_1"/>
    <property type="match status" value="1"/>
</dbReference>
<dbReference type="PROSITE" id="PS50053">
    <property type="entry name" value="UBIQUITIN_2"/>
    <property type="match status" value="1"/>
</dbReference>
<reference key="1">
    <citation type="journal article" date="1990" name="J. Biol. Chem.">
        <title>Ubiquitin extension proteins of Arabidopsis thaliana. Structure, localization, and expression of their promoters in transgenic tobacco.</title>
        <authorList>
            <person name="Callis J."/>
            <person name="Raasch J.A."/>
            <person name="Vierstra R.D."/>
        </authorList>
    </citation>
    <scope>NUCLEOTIDE SEQUENCE [GENOMIC DNA]</scope>
    <source>
        <strain>cv. Columbia</strain>
    </source>
</reference>
<reference key="2">
    <citation type="journal article" date="1999" name="Nature">
        <title>Sequence and analysis of chromosome 2 of the plant Arabidopsis thaliana.</title>
        <authorList>
            <person name="Lin X."/>
            <person name="Kaul S."/>
            <person name="Rounsley S.D."/>
            <person name="Shea T.P."/>
            <person name="Benito M.-I."/>
            <person name="Town C.D."/>
            <person name="Fujii C.Y."/>
            <person name="Mason T.M."/>
            <person name="Bowman C.L."/>
            <person name="Barnstead M.E."/>
            <person name="Feldblyum T.V."/>
            <person name="Buell C.R."/>
            <person name="Ketchum K.A."/>
            <person name="Lee J.J."/>
            <person name="Ronning C.M."/>
            <person name="Koo H.L."/>
            <person name="Moffat K.S."/>
            <person name="Cronin L.A."/>
            <person name="Shen M."/>
            <person name="Pai G."/>
            <person name="Van Aken S."/>
            <person name="Umayam L."/>
            <person name="Tallon L.J."/>
            <person name="Gill J.E."/>
            <person name="Adams M.D."/>
            <person name="Carrera A.J."/>
            <person name="Creasy T.H."/>
            <person name="Goodman H.M."/>
            <person name="Somerville C.R."/>
            <person name="Copenhaver G.P."/>
            <person name="Preuss D."/>
            <person name="Nierman W.C."/>
            <person name="White O."/>
            <person name="Eisen J.A."/>
            <person name="Salzberg S.L."/>
            <person name="Fraser C.M."/>
            <person name="Venter J.C."/>
        </authorList>
    </citation>
    <scope>NUCLEOTIDE SEQUENCE [LARGE SCALE GENOMIC DNA]</scope>
    <source>
        <strain>cv. Columbia</strain>
    </source>
</reference>
<reference key="3">
    <citation type="journal article" date="2017" name="Plant J.">
        <title>Araport11: a complete reannotation of the Arabidopsis thaliana reference genome.</title>
        <authorList>
            <person name="Cheng C.Y."/>
            <person name="Krishnakumar V."/>
            <person name="Chan A.P."/>
            <person name="Thibaud-Nissen F."/>
            <person name="Schobel S."/>
            <person name="Town C.D."/>
        </authorList>
    </citation>
    <scope>GENOME REANNOTATION</scope>
    <source>
        <strain>cv. Columbia</strain>
    </source>
</reference>
<reference key="4">
    <citation type="journal article" date="2003" name="Science">
        <title>Empirical analysis of transcriptional activity in the Arabidopsis genome.</title>
        <authorList>
            <person name="Yamada K."/>
            <person name="Lim J."/>
            <person name="Dale J.M."/>
            <person name="Chen H."/>
            <person name="Shinn P."/>
            <person name="Palm C.J."/>
            <person name="Southwick A.M."/>
            <person name="Wu H.C."/>
            <person name="Kim C.J."/>
            <person name="Nguyen M."/>
            <person name="Pham P.K."/>
            <person name="Cheuk R.F."/>
            <person name="Karlin-Newmann G."/>
            <person name="Liu S.X."/>
            <person name="Lam B."/>
            <person name="Sakano H."/>
            <person name="Wu T."/>
            <person name="Yu G."/>
            <person name="Miranda M."/>
            <person name="Quach H.L."/>
            <person name="Tripp M."/>
            <person name="Chang C.H."/>
            <person name="Lee J.M."/>
            <person name="Toriumi M.J."/>
            <person name="Chan M.M."/>
            <person name="Tang C.C."/>
            <person name="Onodera C.S."/>
            <person name="Deng J.M."/>
            <person name="Akiyama K."/>
            <person name="Ansari Y."/>
            <person name="Arakawa T."/>
            <person name="Banh J."/>
            <person name="Banno F."/>
            <person name="Bowser L."/>
            <person name="Brooks S.Y."/>
            <person name="Carninci P."/>
            <person name="Chao Q."/>
            <person name="Choy N."/>
            <person name="Enju A."/>
            <person name="Goldsmith A.D."/>
            <person name="Gurjal M."/>
            <person name="Hansen N.F."/>
            <person name="Hayashizaki Y."/>
            <person name="Johnson-Hopson C."/>
            <person name="Hsuan V.W."/>
            <person name="Iida K."/>
            <person name="Karnes M."/>
            <person name="Khan S."/>
            <person name="Koesema E."/>
            <person name="Ishida J."/>
            <person name="Jiang P.X."/>
            <person name="Jones T."/>
            <person name="Kawai J."/>
            <person name="Kamiya A."/>
            <person name="Meyers C."/>
            <person name="Nakajima M."/>
            <person name="Narusaka M."/>
            <person name="Seki M."/>
            <person name="Sakurai T."/>
            <person name="Satou M."/>
            <person name="Tamse R."/>
            <person name="Vaysberg M."/>
            <person name="Wallender E.K."/>
            <person name="Wong C."/>
            <person name="Yamamura Y."/>
            <person name="Yuan S."/>
            <person name="Shinozaki K."/>
            <person name="Davis R.W."/>
            <person name="Theologis A."/>
            <person name="Ecker J.R."/>
        </authorList>
    </citation>
    <scope>NUCLEOTIDE SEQUENCE [LARGE SCALE MRNA]</scope>
    <source>
        <strain>cv. Columbia</strain>
    </source>
</reference>
<reference key="5">
    <citation type="journal article" date="2009" name="DNA Res.">
        <title>Analysis of multiple occurrences of alternative splicing events in Arabidopsis thaliana using novel sequenced full-length cDNAs.</title>
        <authorList>
            <person name="Iida K."/>
            <person name="Fukami-Kobayashi K."/>
            <person name="Toyoda A."/>
            <person name="Sakaki Y."/>
            <person name="Kobayashi M."/>
            <person name="Seki M."/>
            <person name="Shinozaki K."/>
        </authorList>
    </citation>
    <scope>NUCLEOTIDE SEQUENCE [LARGE SCALE MRNA]</scope>
    <source>
        <strain>cv. Columbia</strain>
        <tissue>Rosette leaf</tissue>
    </source>
</reference>
<reference key="6">
    <citation type="journal article" date="2001" name="Plant Physiol.">
        <title>The organization of cytoplasmic ribosomal protein genes in the Arabidopsis genome.</title>
        <authorList>
            <person name="Barakat A."/>
            <person name="Szick-Miranda K."/>
            <person name="Chang I.-F."/>
            <person name="Guyot R."/>
            <person name="Blanc G."/>
            <person name="Cooke R."/>
            <person name="Delseny M."/>
            <person name="Bailey-Serres J."/>
        </authorList>
    </citation>
    <scope>GENE FAMILY ORGANIZATION</scope>
    <scope>NOMENCLATURE</scope>
</reference>
<reference key="7">
    <citation type="journal article" date="2023" name="Plant Cell">
        <title>An updated nomenclature for plant ribosomal protein genes.</title>
        <authorList>
            <person name="Scarpin M.R."/>
            <person name="Busche M."/>
            <person name="Martinez R.E."/>
            <person name="Harper L.C."/>
            <person name="Reiser L."/>
            <person name="Szakonyi D."/>
            <person name="Merchante C."/>
            <person name="Lan T."/>
            <person name="Xiong W."/>
            <person name="Mo B."/>
            <person name="Tang G."/>
            <person name="Chen X."/>
            <person name="Bailey-Serres J."/>
            <person name="Browning K.S."/>
            <person name="Brunkard J.O."/>
        </authorList>
    </citation>
    <scope>NOMENCLATURE</scope>
</reference>
<sequence length="128" mass="14733">MQIFVKTLTGKTITLEVESSDTIDNVKAKIQDKEGIPPDQQRLIFAGKQLEDGRTLADYNIQKESTLHLVLRLRGGIIEPSLMMLARKYNQDKMICRKCYARLHPRAVNCRKKKCGHSNQLRPKKKIK</sequence>